<sequence length="340" mass="38414">MSLTITKDNIFPKGYRGRLTEGVTYDERNNTLLWVDIIQGEVHRVFLDNTNINTNTSSSSHETLKWDSSNESIGAICLTNDPNKLIICSKYGLAYGDFSSSTIEYFFKYPHTTNPDEKLRLRSNDGIIDPWGNLWIGVMNDFPIGAKEGIQPEGKLYRIGFSKESNKLTCDVMIENSLISNGLCFNNQGDEFYWTDSLTFKIWKYDYDKTTNKLTNKSVFIDLKQFYPDVEQPEPDGLVMTNNGEIYTCVFSTGTILHVDNQGKEIERIKIAAKRPTCVTIGSGIKNNEMFVTTGHLKLDDEKATIDAINLDGDLGGFLFKLKVDKDLNGQKKNIWGGKV</sequence>
<gene>
    <name type="primary">CGR1</name>
    <name type="ordered locus">CAALFM_C402760CA</name>
    <name type="ORF">CaO19.10237</name>
    <name type="ORF">CaO19.2722</name>
</gene>
<accession>P56553</accession>
<accession>A0A1D8PLN2</accession>
<accession>Q5AF85</accession>
<accession>Q5AFX1</accession>
<dbReference type="EMBL" id="AB013716">
    <property type="protein sequence ID" value="BAA28176.1"/>
    <property type="molecule type" value="Genomic_DNA"/>
</dbReference>
<dbReference type="EMBL" id="CP017626">
    <property type="protein sequence ID" value="AOW29043.1"/>
    <property type="molecule type" value="Genomic_DNA"/>
</dbReference>
<dbReference type="RefSeq" id="XP_720472.2">
    <property type="nucleotide sequence ID" value="XM_715379.2"/>
</dbReference>
<dbReference type="SMR" id="P56553"/>
<dbReference type="BioGRID" id="1220947">
    <property type="interactions" value="1"/>
</dbReference>
<dbReference type="FunCoup" id="P56553">
    <property type="interactions" value="53"/>
</dbReference>
<dbReference type="STRING" id="237561.P56553"/>
<dbReference type="EnsemblFungi" id="C4_02760C_A-T">
    <property type="protein sequence ID" value="C4_02760C_A-T-p1"/>
    <property type="gene ID" value="C4_02760C_A"/>
</dbReference>
<dbReference type="GeneID" id="3637853"/>
<dbReference type="KEGG" id="cal:CAALFM_C402760CA"/>
<dbReference type="CGD" id="CAL0000196952">
    <property type="gene designation" value="CGR1"/>
</dbReference>
<dbReference type="VEuPathDB" id="FungiDB:C4_02760C_A"/>
<dbReference type="eggNOG" id="KOG4499">
    <property type="taxonomic scope" value="Eukaryota"/>
</dbReference>
<dbReference type="HOGENOM" id="CLU_036110_3_0_1"/>
<dbReference type="InParanoid" id="P56553"/>
<dbReference type="OrthoDB" id="423498at2759"/>
<dbReference type="PRO" id="PR:P56553"/>
<dbReference type="Proteomes" id="UP000000559">
    <property type="component" value="Chromosome 4"/>
</dbReference>
<dbReference type="GO" id="GO:0005509">
    <property type="term" value="F:calcium ion binding"/>
    <property type="evidence" value="ECO:0000318"/>
    <property type="project" value="GO_Central"/>
</dbReference>
<dbReference type="GO" id="GO:0004341">
    <property type="term" value="F:gluconolactonase activity"/>
    <property type="evidence" value="ECO:0000318"/>
    <property type="project" value="GO_Central"/>
</dbReference>
<dbReference type="GO" id="GO:0030308">
    <property type="term" value="P:negative regulation of cell growth"/>
    <property type="evidence" value="ECO:0000270"/>
    <property type="project" value="CGD"/>
</dbReference>
<dbReference type="Gene3D" id="2.120.10.30">
    <property type="entry name" value="TolB, C-terminal domain"/>
    <property type="match status" value="1"/>
</dbReference>
<dbReference type="InterPro" id="IPR011042">
    <property type="entry name" value="6-blade_b-propeller_TolB-like"/>
</dbReference>
<dbReference type="InterPro" id="IPR013658">
    <property type="entry name" value="SGL"/>
</dbReference>
<dbReference type="InterPro" id="IPR005511">
    <property type="entry name" value="SMP-30"/>
</dbReference>
<dbReference type="PANTHER" id="PTHR10907">
    <property type="entry name" value="REGUCALCIN"/>
    <property type="match status" value="1"/>
</dbReference>
<dbReference type="PANTHER" id="PTHR10907:SF47">
    <property type="entry name" value="REGUCALCIN"/>
    <property type="match status" value="1"/>
</dbReference>
<dbReference type="Pfam" id="PF08450">
    <property type="entry name" value="SGL"/>
    <property type="match status" value="1"/>
</dbReference>
<dbReference type="PRINTS" id="PR01790">
    <property type="entry name" value="SMP30FAMILY"/>
</dbReference>
<dbReference type="SUPFAM" id="SSF63829">
    <property type="entry name" value="Calcium-dependent phosphotriesterase"/>
    <property type="match status" value="1"/>
</dbReference>
<protein>
    <recommendedName>
        <fullName>Cell growth-regulated gene 1 protein</fullName>
    </recommendedName>
</protein>
<proteinExistence type="inferred from homology"/>
<name>CGR1P_CANAL</name>
<comment type="function">
    <text>Involved in the cell growth regulation.</text>
</comment>
<comment type="similarity">
    <text evidence="1">Belongs to the SMP-30/CGR1 family.</text>
</comment>
<reference key="1">
    <citation type="journal article" date="2001" name="Biochim. Biophys. Acta">
        <title>Isolation and expression of a gene (CGR1) regulated during the yeast-hyphal transition in Candida albicans.</title>
        <authorList>
            <person name="Cho T."/>
            <person name="Sudoh M."/>
            <person name="Tanaka T."/>
            <person name="Nakashima Y."/>
            <person name="Chibana H."/>
            <person name="Kaminishi Y."/>
        </authorList>
    </citation>
    <scope>NUCLEOTIDE SEQUENCE [GENOMIC DNA]</scope>
    <source>
        <strain>JCM 9061</strain>
    </source>
</reference>
<reference key="2">
    <citation type="journal article" date="2004" name="Proc. Natl. Acad. Sci. U.S.A.">
        <title>The diploid genome sequence of Candida albicans.</title>
        <authorList>
            <person name="Jones T."/>
            <person name="Federspiel N.A."/>
            <person name="Chibana H."/>
            <person name="Dungan J."/>
            <person name="Kalman S."/>
            <person name="Magee B.B."/>
            <person name="Newport G."/>
            <person name="Thorstenson Y.R."/>
            <person name="Agabian N."/>
            <person name="Magee P.T."/>
            <person name="Davis R.W."/>
            <person name="Scherer S."/>
        </authorList>
    </citation>
    <scope>NUCLEOTIDE SEQUENCE [LARGE SCALE GENOMIC DNA]</scope>
    <source>
        <strain>SC5314 / ATCC MYA-2876</strain>
    </source>
</reference>
<reference key="3">
    <citation type="journal article" date="2007" name="Genome Biol.">
        <title>Assembly of the Candida albicans genome into sixteen supercontigs aligned on the eight chromosomes.</title>
        <authorList>
            <person name="van het Hoog M."/>
            <person name="Rast T.J."/>
            <person name="Martchenko M."/>
            <person name="Grindle S."/>
            <person name="Dignard D."/>
            <person name="Hogues H."/>
            <person name="Cuomo C."/>
            <person name="Berriman M."/>
            <person name="Scherer S."/>
            <person name="Magee B.B."/>
            <person name="Whiteway M."/>
            <person name="Chibana H."/>
            <person name="Nantel A."/>
            <person name="Magee P.T."/>
        </authorList>
    </citation>
    <scope>GENOME REANNOTATION</scope>
    <source>
        <strain>SC5314 / ATCC MYA-2876</strain>
    </source>
</reference>
<reference key="4">
    <citation type="journal article" date="2013" name="Genome Biol.">
        <title>Assembly of a phased diploid Candida albicans genome facilitates allele-specific measurements and provides a simple model for repeat and indel structure.</title>
        <authorList>
            <person name="Muzzey D."/>
            <person name="Schwartz K."/>
            <person name="Weissman J.S."/>
            <person name="Sherlock G."/>
        </authorList>
    </citation>
    <scope>NUCLEOTIDE SEQUENCE [LARGE SCALE GENOMIC DNA]</scope>
    <scope>GENOME REANNOTATION</scope>
    <source>
        <strain>SC5314 / ATCC MYA-2876</strain>
    </source>
</reference>
<keyword id="KW-1185">Reference proteome</keyword>
<organism>
    <name type="scientific">Candida albicans (strain SC5314 / ATCC MYA-2876)</name>
    <name type="common">Yeast</name>
    <dbReference type="NCBI Taxonomy" id="237561"/>
    <lineage>
        <taxon>Eukaryota</taxon>
        <taxon>Fungi</taxon>
        <taxon>Dikarya</taxon>
        <taxon>Ascomycota</taxon>
        <taxon>Saccharomycotina</taxon>
        <taxon>Pichiomycetes</taxon>
        <taxon>Debaryomycetaceae</taxon>
        <taxon>Candida/Lodderomyces clade</taxon>
        <taxon>Candida</taxon>
    </lineage>
</organism>
<feature type="chain" id="PRO_0000173051" description="Cell growth-regulated gene 1 protein">
    <location>
        <begin position="1"/>
        <end position="340"/>
    </location>
</feature>
<feature type="sequence conflict" description="In Ref. 1; BAA28176." evidence="1" ref="1">
    <original>INT</original>
    <variation>TNI</variation>
    <location>
        <begin position="52"/>
        <end position="54"/>
    </location>
</feature>
<feature type="sequence conflict" description="In Ref. 1; BAA28176." evidence="1" ref="1">
    <original>D</original>
    <variation>N</variation>
    <location>
        <position position="206"/>
    </location>
</feature>
<feature type="sequence conflict" description="In Ref. 1; BAA28176." evidence="1" ref="1">
    <original>P</original>
    <variation>S</variation>
    <location>
        <position position="233"/>
    </location>
</feature>
<evidence type="ECO:0000305" key="1"/>